<evidence type="ECO:0000250" key="1">
    <source>
        <dbReference type="UniProtKB" id="Q2TBK2"/>
    </source>
</evidence>
<evidence type="ECO:0000250" key="2">
    <source>
        <dbReference type="UniProtKB" id="Q9BYD2"/>
    </source>
</evidence>
<evidence type="ECO:0000269" key="3">
    <source>
    </source>
</evidence>
<evidence type="ECO:0000269" key="4">
    <source>
    </source>
</evidence>
<evidence type="ECO:0000269" key="5">
    <source>
    </source>
</evidence>
<evidence type="ECO:0000305" key="6"/>
<evidence type="ECO:0000312" key="7">
    <source>
        <dbReference type="EMBL" id="AAL49084.1"/>
    </source>
</evidence>
<keyword id="KW-0496">Mitochondrion</keyword>
<keyword id="KW-1185">Reference proteome</keyword>
<keyword id="KW-0687">Ribonucleoprotein</keyword>
<keyword id="KW-0689">Ribosomal protein</keyword>
<keyword id="KW-0809">Transit peptide</keyword>
<proteinExistence type="evidence at transcript level"/>
<accession>Q9VF89</accession>
<dbReference type="EMBL" id="AE014297">
    <property type="protein sequence ID" value="AAF55172.2"/>
    <property type="molecule type" value="Genomic_DNA"/>
</dbReference>
<dbReference type="EMBL" id="AY071462">
    <property type="protein sequence ID" value="AAL49084.1"/>
    <property type="molecule type" value="mRNA"/>
</dbReference>
<dbReference type="EMBL" id="AY118435">
    <property type="protein sequence ID" value="AAM48464.1"/>
    <property type="molecule type" value="mRNA"/>
</dbReference>
<dbReference type="RefSeq" id="NP_524363.3">
    <property type="nucleotide sequence ID" value="NM_079639.5"/>
</dbReference>
<dbReference type="SMR" id="Q9VF89"/>
<dbReference type="BioGRID" id="66922">
    <property type="interactions" value="2"/>
</dbReference>
<dbReference type="DIP" id="DIP-23317N"/>
<dbReference type="FunCoup" id="Q9VF89">
    <property type="interactions" value="1827"/>
</dbReference>
<dbReference type="IntAct" id="Q9VF89">
    <property type="interactions" value="4"/>
</dbReference>
<dbReference type="STRING" id="7227.FBpp0082540"/>
<dbReference type="PaxDb" id="7227-FBpp0082540"/>
<dbReference type="DNASU" id="41859"/>
<dbReference type="EnsemblMetazoa" id="FBtr0083084">
    <property type="protein sequence ID" value="FBpp0082540"/>
    <property type="gene ID" value="FBgn0038319"/>
</dbReference>
<dbReference type="GeneID" id="41859"/>
<dbReference type="KEGG" id="dme:Dmel_CG31478"/>
<dbReference type="AGR" id="FB:FBgn0038319"/>
<dbReference type="CTD" id="65005"/>
<dbReference type="FlyBase" id="FBgn0038319">
    <property type="gene designation" value="mRpL9"/>
</dbReference>
<dbReference type="VEuPathDB" id="VectorBase:FBgn0038319"/>
<dbReference type="eggNOG" id="KOG4607">
    <property type="taxonomic scope" value="Eukaryota"/>
</dbReference>
<dbReference type="GeneTree" id="ENSGT00390000008281"/>
<dbReference type="HOGENOM" id="CLU_070493_0_0_1"/>
<dbReference type="InParanoid" id="Q9VF89"/>
<dbReference type="OMA" id="AKHFIYE"/>
<dbReference type="OrthoDB" id="5555409at2759"/>
<dbReference type="PhylomeDB" id="Q9VF89"/>
<dbReference type="Reactome" id="R-DME-5389840">
    <property type="pathway name" value="Mitochondrial translation elongation"/>
</dbReference>
<dbReference type="Reactome" id="R-DME-5419276">
    <property type="pathway name" value="Mitochondrial translation termination"/>
</dbReference>
<dbReference type="BioGRID-ORCS" id="41859">
    <property type="hits" value="1 hit in 1 CRISPR screen"/>
</dbReference>
<dbReference type="GenomeRNAi" id="41859"/>
<dbReference type="PRO" id="PR:Q9VF89"/>
<dbReference type="Proteomes" id="UP000000803">
    <property type="component" value="Chromosome 3R"/>
</dbReference>
<dbReference type="Bgee" id="FBgn0038319">
    <property type="expression patterns" value="Expressed in adult Malpighian tubule (Drosophila) and 116 other cell types or tissues"/>
</dbReference>
<dbReference type="GO" id="GO:0005762">
    <property type="term" value="C:mitochondrial large ribosomal subunit"/>
    <property type="evidence" value="ECO:0000250"/>
    <property type="project" value="UniProtKB"/>
</dbReference>
<dbReference type="GO" id="GO:0005739">
    <property type="term" value="C:mitochondrion"/>
    <property type="evidence" value="ECO:0000318"/>
    <property type="project" value="GO_Central"/>
</dbReference>
<dbReference type="GO" id="GO:0003735">
    <property type="term" value="F:structural constituent of ribosome"/>
    <property type="evidence" value="ECO:0000304"/>
    <property type="project" value="UniProtKB"/>
</dbReference>
<dbReference type="GO" id="GO:0032543">
    <property type="term" value="P:mitochondrial translation"/>
    <property type="evidence" value="ECO:0000304"/>
    <property type="project" value="FlyBase"/>
</dbReference>
<dbReference type="GO" id="GO:0006412">
    <property type="term" value="P:translation"/>
    <property type="evidence" value="ECO:0000304"/>
    <property type="project" value="UniProtKB"/>
</dbReference>
<dbReference type="FunFam" id="3.40.5.10:FF:000005">
    <property type="entry name" value="39S ribosomal protein L9, mitochondrial"/>
    <property type="match status" value="1"/>
</dbReference>
<dbReference type="Gene3D" id="3.40.5.10">
    <property type="entry name" value="Ribosomal protein L9, N-terminal domain"/>
    <property type="match status" value="1"/>
</dbReference>
<dbReference type="InterPro" id="IPR000244">
    <property type="entry name" value="Ribosomal_bL9"/>
</dbReference>
<dbReference type="InterPro" id="IPR009027">
    <property type="entry name" value="Ribosomal_bL9/RNase_H1_N"/>
</dbReference>
<dbReference type="InterPro" id="IPR020070">
    <property type="entry name" value="Ribosomal_bL9_N"/>
</dbReference>
<dbReference type="InterPro" id="IPR036935">
    <property type="entry name" value="Ribosomal_bL9_N_sf"/>
</dbReference>
<dbReference type="PANTHER" id="PTHR21368">
    <property type="entry name" value="50S RIBOSOMAL PROTEIN L9"/>
    <property type="match status" value="1"/>
</dbReference>
<dbReference type="Pfam" id="PF01281">
    <property type="entry name" value="Ribosomal_L9_N"/>
    <property type="match status" value="1"/>
</dbReference>
<dbReference type="SUPFAM" id="SSF55658">
    <property type="entry name" value="L9 N-domain-like"/>
    <property type="match status" value="1"/>
</dbReference>
<sequence length="248" mass="28805">MLKNIYVTPLNLLKSATSLQQQVRTTFVLKRKYDPPLHKTNEKPRRMRAKNFIYELVDDTLVKKRPNIEVVLKTFVEGVGDKGDVVSMKPHFVYNKLLLPGLAAYNTPENVAKYAKTEAEKSTVKHSSPYAQRTVNMLETIVLAVVMNKDEPWVLEPWHIKASLRKTGFYCREECITLPKERIEGPDLKKENKDFYCTVTINKLEQARLKCRLHHWSTDPSERLPYVLEHWKLQSEPLLDVCSPEKTP</sequence>
<feature type="transit peptide" description="Mitochondrion" evidence="1">
    <location>
        <begin position="1"/>
        <end position="25"/>
    </location>
</feature>
<feature type="chain" id="PRO_0000030552" description="Large ribosomal subunit protein bL9m">
    <location>
        <begin position="26"/>
        <end position="248"/>
    </location>
</feature>
<comment type="subunit">
    <text evidence="2">Component of the mitochondrial ribosome large subunit (39S) which comprises a 16S rRNA and about 50 distinct proteins.</text>
</comment>
<comment type="subcellular location">
    <subcellularLocation>
        <location evidence="2">Mitochondrion</location>
    </subcellularLocation>
</comment>
<comment type="similarity">
    <text evidence="6">Belongs to the bacterial ribosomal protein bL9 family.</text>
</comment>
<gene>
    <name type="primary">mRpL9</name>
    <name type="ORF">CG4923</name>
</gene>
<protein>
    <recommendedName>
        <fullName evidence="6">Large ribosomal subunit protein bL9m</fullName>
    </recommendedName>
    <alternativeName>
        <fullName>39S ribosomal protein L9, mitochondrial</fullName>
        <shortName>L9mt</shortName>
        <shortName>MRP-L9</shortName>
    </alternativeName>
</protein>
<organism evidence="7">
    <name type="scientific">Drosophila melanogaster</name>
    <name type="common">Fruit fly</name>
    <dbReference type="NCBI Taxonomy" id="7227"/>
    <lineage>
        <taxon>Eukaryota</taxon>
        <taxon>Metazoa</taxon>
        <taxon>Ecdysozoa</taxon>
        <taxon>Arthropoda</taxon>
        <taxon>Hexapoda</taxon>
        <taxon>Insecta</taxon>
        <taxon>Pterygota</taxon>
        <taxon>Neoptera</taxon>
        <taxon>Endopterygota</taxon>
        <taxon>Diptera</taxon>
        <taxon>Brachycera</taxon>
        <taxon>Muscomorpha</taxon>
        <taxon>Ephydroidea</taxon>
        <taxon>Drosophilidae</taxon>
        <taxon>Drosophila</taxon>
        <taxon>Sophophora</taxon>
    </lineage>
</organism>
<reference evidence="6" key="1">
    <citation type="journal article" date="2000" name="Science">
        <title>The genome sequence of Drosophila melanogaster.</title>
        <authorList>
            <person name="Adams M.D."/>
            <person name="Celniker S.E."/>
            <person name="Holt R.A."/>
            <person name="Evans C.A."/>
            <person name="Gocayne J.D."/>
            <person name="Amanatides P.G."/>
            <person name="Scherer S.E."/>
            <person name="Li P.W."/>
            <person name="Hoskins R.A."/>
            <person name="Galle R.F."/>
            <person name="George R.A."/>
            <person name="Lewis S.E."/>
            <person name="Richards S."/>
            <person name="Ashburner M."/>
            <person name="Henderson S.N."/>
            <person name="Sutton G.G."/>
            <person name="Wortman J.R."/>
            <person name="Yandell M.D."/>
            <person name="Zhang Q."/>
            <person name="Chen L.X."/>
            <person name="Brandon R.C."/>
            <person name="Rogers Y.-H.C."/>
            <person name="Blazej R.G."/>
            <person name="Champe M."/>
            <person name="Pfeiffer B.D."/>
            <person name="Wan K.H."/>
            <person name="Doyle C."/>
            <person name="Baxter E.G."/>
            <person name="Helt G."/>
            <person name="Nelson C.R."/>
            <person name="Miklos G.L.G."/>
            <person name="Abril J.F."/>
            <person name="Agbayani A."/>
            <person name="An H.-J."/>
            <person name="Andrews-Pfannkoch C."/>
            <person name="Baldwin D."/>
            <person name="Ballew R.M."/>
            <person name="Basu A."/>
            <person name="Baxendale J."/>
            <person name="Bayraktaroglu L."/>
            <person name="Beasley E.M."/>
            <person name="Beeson K.Y."/>
            <person name="Benos P.V."/>
            <person name="Berman B.P."/>
            <person name="Bhandari D."/>
            <person name="Bolshakov S."/>
            <person name="Borkova D."/>
            <person name="Botchan M.R."/>
            <person name="Bouck J."/>
            <person name="Brokstein P."/>
            <person name="Brottier P."/>
            <person name="Burtis K.C."/>
            <person name="Busam D.A."/>
            <person name="Butler H."/>
            <person name="Cadieu E."/>
            <person name="Center A."/>
            <person name="Chandra I."/>
            <person name="Cherry J.M."/>
            <person name="Cawley S."/>
            <person name="Dahlke C."/>
            <person name="Davenport L.B."/>
            <person name="Davies P."/>
            <person name="de Pablos B."/>
            <person name="Delcher A."/>
            <person name="Deng Z."/>
            <person name="Mays A.D."/>
            <person name="Dew I."/>
            <person name="Dietz S.M."/>
            <person name="Dodson K."/>
            <person name="Doup L.E."/>
            <person name="Downes M."/>
            <person name="Dugan-Rocha S."/>
            <person name="Dunkov B.C."/>
            <person name="Dunn P."/>
            <person name="Durbin K.J."/>
            <person name="Evangelista C.C."/>
            <person name="Ferraz C."/>
            <person name="Ferriera S."/>
            <person name="Fleischmann W."/>
            <person name="Fosler C."/>
            <person name="Gabrielian A.E."/>
            <person name="Garg N.S."/>
            <person name="Gelbart W.M."/>
            <person name="Glasser K."/>
            <person name="Glodek A."/>
            <person name="Gong F."/>
            <person name="Gorrell J.H."/>
            <person name="Gu Z."/>
            <person name="Guan P."/>
            <person name="Harris M."/>
            <person name="Harris N.L."/>
            <person name="Harvey D.A."/>
            <person name="Heiman T.J."/>
            <person name="Hernandez J.R."/>
            <person name="Houck J."/>
            <person name="Hostin D."/>
            <person name="Houston K.A."/>
            <person name="Howland T.J."/>
            <person name="Wei M.-H."/>
            <person name="Ibegwam C."/>
            <person name="Jalali M."/>
            <person name="Kalush F."/>
            <person name="Karpen G.H."/>
            <person name="Ke Z."/>
            <person name="Kennison J.A."/>
            <person name="Ketchum K.A."/>
            <person name="Kimmel B.E."/>
            <person name="Kodira C.D."/>
            <person name="Kraft C.L."/>
            <person name="Kravitz S."/>
            <person name="Kulp D."/>
            <person name="Lai Z."/>
            <person name="Lasko P."/>
            <person name="Lei Y."/>
            <person name="Levitsky A.A."/>
            <person name="Li J.H."/>
            <person name="Li Z."/>
            <person name="Liang Y."/>
            <person name="Lin X."/>
            <person name="Liu X."/>
            <person name="Mattei B."/>
            <person name="McIntosh T.C."/>
            <person name="McLeod M.P."/>
            <person name="McPherson D."/>
            <person name="Merkulov G."/>
            <person name="Milshina N.V."/>
            <person name="Mobarry C."/>
            <person name="Morris J."/>
            <person name="Moshrefi A."/>
            <person name="Mount S.M."/>
            <person name="Moy M."/>
            <person name="Murphy B."/>
            <person name="Murphy L."/>
            <person name="Muzny D.M."/>
            <person name="Nelson D.L."/>
            <person name="Nelson D.R."/>
            <person name="Nelson K.A."/>
            <person name="Nixon K."/>
            <person name="Nusskern D.R."/>
            <person name="Pacleb J.M."/>
            <person name="Palazzolo M."/>
            <person name="Pittman G.S."/>
            <person name="Pan S."/>
            <person name="Pollard J."/>
            <person name="Puri V."/>
            <person name="Reese M.G."/>
            <person name="Reinert K."/>
            <person name="Remington K."/>
            <person name="Saunders R.D.C."/>
            <person name="Scheeler F."/>
            <person name="Shen H."/>
            <person name="Shue B.C."/>
            <person name="Siden-Kiamos I."/>
            <person name="Simpson M."/>
            <person name="Skupski M.P."/>
            <person name="Smith T.J."/>
            <person name="Spier E."/>
            <person name="Spradling A.C."/>
            <person name="Stapleton M."/>
            <person name="Strong R."/>
            <person name="Sun E."/>
            <person name="Svirskas R."/>
            <person name="Tector C."/>
            <person name="Turner R."/>
            <person name="Venter E."/>
            <person name="Wang A.H."/>
            <person name="Wang X."/>
            <person name="Wang Z.-Y."/>
            <person name="Wassarman D.A."/>
            <person name="Weinstock G.M."/>
            <person name="Weissenbach J."/>
            <person name="Williams S.M."/>
            <person name="Woodage T."/>
            <person name="Worley K.C."/>
            <person name="Wu D."/>
            <person name="Yang S."/>
            <person name="Yao Q.A."/>
            <person name="Ye J."/>
            <person name="Yeh R.-F."/>
            <person name="Zaveri J.S."/>
            <person name="Zhan M."/>
            <person name="Zhang G."/>
            <person name="Zhao Q."/>
            <person name="Zheng L."/>
            <person name="Zheng X.H."/>
            <person name="Zhong F.N."/>
            <person name="Zhong W."/>
            <person name="Zhou X."/>
            <person name="Zhu S.C."/>
            <person name="Zhu X."/>
            <person name="Smith H.O."/>
            <person name="Gibbs R.A."/>
            <person name="Myers E.W."/>
            <person name="Rubin G.M."/>
            <person name="Venter J.C."/>
        </authorList>
    </citation>
    <scope>NUCLEOTIDE SEQUENCE [LARGE SCALE GENOMIC DNA]</scope>
    <source>
        <strain evidence="3">Berkeley</strain>
    </source>
</reference>
<reference evidence="6" key="2">
    <citation type="journal article" date="2002" name="Genome Biol.">
        <title>Annotation of the Drosophila melanogaster euchromatic genome: a systematic review.</title>
        <authorList>
            <person name="Misra S."/>
            <person name="Crosby M.A."/>
            <person name="Mungall C.J."/>
            <person name="Matthews B.B."/>
            <person name="Campbell K.S."/>
            <person name="Hradecky P."/>
            <person name="Huang Y."/>
            <person name="Kaminker J.S."/>
            <person name="Millburn G.H."/>
            <person name="Prochnik S.E."/>
            <person name="Smith C.D."/>
            <person name="Tupy J.L."/>
            <person name="Whitfield E.J."/>
            <person name="Bayraktaroglu L."/>
            <person name="Berman B.P."/>
            <person name="Bettencourt B.R."/>
            <person name="Celniker S.E."/>
            <person name="de Grey A.D.N.J."/>
            <person name="Drysdale R.A."/>
            <person name="Harris N.L."/>
            <person name="Richter J."/>
            <person name="Russo S."/>
            <person name="Schroeder A.J."/>
            <person name="Shu S.Q."/>
            <person name="Stapleton M."/>
            <person name="Yamada C."/>
            <person name="Ashburner M."/>
            <person name="Gelbart W.M."/>
            <person name="Rubin G.M."/>
            <person name="Lewis S.E."/>
        </authorList>
    </citation>
    <scope>GENOME REANNOTATION</scope>
    <source>
        <strain evidence="5">Berkeley</strain>
    </source>
</reference>
<reference evidence="6" key="3">
    <citation type="journal article" date="2002" name="Genome Biol.">
        <title>A Drosophila full-length cDNA resource.</title>
        <authorList>
            <person name="Stapleton M."/>
            <person name="Carlson J.W."/>
            <person name="Brokstein P."/>
            <person name="Yu C."/>
            <person name="Champe M."/>
            <person name="George R.A."/>
            <person name="Guarin H."/>
            <person name="Kronmiller B."/>
            <person name="Pacleb J.M."/>
            <person name="Park S."/>
            <person name="Wan K.H."/>
            <person name="Rubin G.M."/>
            <person name="Celniker S.E."/>
        </authorList>
    </citation>
    <scope>NUCLEOTIDE SEQUENCE [LARGE SCALE MRNA]</scope>
    <source>
        <strain evidence="4">Berkeley</strain>
        <tissue evidence="4">Embryo</tissue>
        <tissue evidence="4">Head</tissue>
    </source>
</reference>
<reference evidence="6" key="4">
    <citation type="journal article" date="2001" name="J. Biol. Chem.">
        <title>Structural compensation for the deficit of rRNA with proteins in the mammalian mitochondrial ribosome. Systematic analysis of protein components of the large ribosomal subunit from mammalian mitochondria.</title>
        <authorList>
            <person name="Suzuki T."/>
            <person name="Terasaki M."/>
            <person name="Takemoto-Hori C."/>
            <person name="Hanada T."/>
            <person name="Ueda T."/>
            <person name="Wada A."/>
            <person name="Watanabe K."/>
        </authorList>
    </citation>
    <scope>IDENTIFICATION</scope>
</reference>
<name>RM09_DROME</name>